<accession>Q7VN64</accession>
<feature type="chain" id="PRO_0000192656" description="Sec-independent protein translocase protein TatB">
    <location>
        <begin position="1"/>
        <end position="162"/>
    </location>
</feature>
<feature type="transmembrane region" description="Helical" evidence="1">
    <location>
        <begin position="1"/>
        <end position="21"/>
    </location>
</feature>
<feature type="region of interest" description="Disordered" evidence="2">
    <location>
        <begin position="136"/>
        <end position="162"/>
    </location>
</feature>
<organism>
    <name type="scientific">Haemophilus ducreyi (strain 35000HP / ATCC 700724)</name>
    <dbReference type="NCBI Taxonomy" id="233412"/>
    <lineage>
        <taxon>Bacteria</taxon>
        <taxon>Pseudomonadati</taxon>
        <taxon>Pseudomonadota</taxon>
        <taxon>Gammaproteobacteria</taxon>
        <taxon>Pasteurellales</taxon>
        <taxon>Pasteurellaceae</taxon>
        <taxon>Haemophilus</taxon>
    </lineage>
</organism>
<name>TATB_HAEDU</name>
<dbReference type="EMBL" id="AE017143">
    <property type="protein sequence ID" value="AAP95629.1"/>
    <property type="molecule type" value="Genomic_DNA"/>
</dbReference>
<dbReference type="RefSeq" id="WP_010944681.1">
    <property type="nucleotide sequence ID" value="NC_002940.2"/>
</dbReference>
<dbReference type="SMR" id="Q7VN64"/>
<dbReference type="STRING" id="233412.HD_0715"/>
<dbReference type="KEGG" id="hdu:HD_0715"/>
<dbReference type="eggNOG" id="COG1826">
    <property type="taxonomic scope" value="Bacteria"/>
</dbReference>
<dbReference type="HOGENOM" id="CLU_086034_1_0_6"/>
<dbReference type="OrthoDB" id="9816005at2"/>
<dbReference type="Proteomes" id="UP000001022">
    <property type="component" value="Chromosome"/>
</dbReference>
<dbReference type="GO" id="GO:0033281">
    <property type="term" value="C:TAT protein transport complex"/>
    <property type="evidence" value="ECO:0007669"/>
    <property type="project" value="UniProtKB-UniRule"/>
</dbReference>
<dbReference type="GO" id="GO:0008320">
    <property type="term" value="F:protein transmembrane transporter activity"/>
    <property type="evidence" value="ECO:0007669"/>
    <property type="project" value="UniProtKB-UniRule"/>
</dbReference>
<dbReference type="GO" id="GO:0043953">
    <property type="term" value="P:protein transport by the Tat complex"/>
    <property type="evidence" value="ECO:0007669"/>
    <property type="project" value="UniProtKB-UniRule"/>
</dbReference>
<dbReference type="Gene3D" id="1.20.5.3310">
    <property type="match status" value="1"/>
</dbReference>
<dbReference type="HAMAP" id="MF_00237">
    <property type="entry name" value="TatB"/>
    <property type="match status" value="1"/>
</dbReference>
<dbReference type="InterPro" id="IPR018448">
    <property type="entry name" value="TatB"/>
</dbReference>
<dbReference type="NCBIfam" id="TIGR01410">
    <property type="entry name" value="tatB"/>
    <property type="match status" value="1"/>
</dbReference>
<dbReference type="PANTHER" id="PTHR33162">
    <property type="entry name" value="SEC-INDEPENDENT PROTEIN TRANSLOCASE PROTEIN TATA, CHLOROPLASTIC"/>
    <property type="match status" value="1"/>
</dbReference>
<dbReference type="PANTHER" id="PTHR33162:SF1">
    <property type="entry name" value="SEC-INDEPENDENT PROTEIN TRANSLOCASE PROTEIN TATA, CHLOROPLASTIC"/>
    <property type="match status" value="1"/>
</dbReference>
<dbReference type="PRINTS" id="PR01506">
    <property type="entry name" value="TATBPROTEIN"/>
</dbReference>
<reference key="1">
    <citation type="submission" date="2003-06" db="EMBL/GenBank/DDBJ databases">
        <title>The complete genome sequence of Haemophilus ducreyi.</title>
        <authorList>
            <person name="Munson R.S. Jr."/>
            <person name="Ray W.C."/>
            <person name="Mahairas G."/>
            <person name="Sabo P."/>
            <person name="Mungur R."/>
            <person name="Johnson L."/>
            <person name="Nguyen D."/>
            <person name="Wang J."/>
            <person name="Forst C."/>
            <person name="Hood L."/>
        </authorList>
    </citation>
    <scope>NUCLEOTIDE SEQUENCE [LARGE SCALE GENOMIC DNA]</scope>
    <source>
        <strain>35000HP / ATCC 700724</strain>
    </source>
</reference>
<evidence type="ECO:0000255" key="1">
    <source>
        <dbReference type="HAMAP-Rule" id="MF_00237"/>
    </source>
</evidence>
<evidence type="ECO:0000256" key="2">
    <source>
        <dbReference type="SAM" id="MobiDB-lite"/>
    </source>
</evidence>
<protein>
    <recommendedName>
        <fullName evidence="1">Sec-independent protein translocase protein TatB</fullName>
    </recommendedName>
</protein>
<keyword id="KW-0997">Cell inner membrane</keyword>
<keyword id="KW-1003">Cell membrane</keyword>
<keyword id="KW-0472">Membrane</keyword>
<keyword id="KW-0653">Protein transport</keyword>
<keyword id="KW-1185">Reference proteome</keyword>
<keyword id="KW-0811">Translocation</keyword>
<keyword id="KW-0812">Transmembrane</keyword>
<keyword id="KW-1133">Transmembrane helix</keyword>
<keyword id="KW-0813">Transport</keyword>
<gene>
    <name evidence="1" type="primary">tatB</name>
    <name type="ordered locus">HD_0715</name>
</gene>
<sequence length="162" mass="18075">MFDIGFSELILIFVVGLVVLGPQRLPVAIRTVMGWVRTIRSLATNVQHELAQELKLQELQESIKKAEAMNLTTLSPELTQTVEDLKQSAQKMQNDLNNANQIGKLTDEQVADIQQNIANAQPSEITEANELDESKLTAYYPPDDDLVSPSTTKLEQDKQNVN</sequence>
<proteinExistence type="inferred from homology"/>
<comment type="function">
    <text evidence="1">Part of the twin-arginine translocation (Tat) system that transports large folded proteins containing a characteristic twin-arginine motif in their signal peptide across membranes. Together with TatC, TatB is part of a receptor directly interacting with Tat signal peptides. TatB may form an oligomeric binding site that transiently accommodates folded Tat precursor proteins before their translocation.</text>
</comment>
<comment type="subunit">
    <text evidence="1">The Tat system comprises two distinct complexes: a TatABC complex, containing multiple copies of TatA, TatB and TatC subunits, and a separate TatA complex, containing only TatA subunits. Substrates initially bind to the TatABC complex, which probably triggers association of the separate TatA complex to form the active translocon.</text>
</comment>
<comment type="subcellular location">
    <subcellularLocation>
        <location evidence="1">Cell inner membrane</location>
        <topology evidence="1">Single-pass membrane protein</topology>
    </subcellularLocation>
</comment>
<comment type="similarity">
    <text evidence="1">Belongs to the TatB family.</text>
</comment>